<name>RR15_PLAOC</name>
<evidence type="ECO:0000250" key="1"/>
<evidence type="ECO:0000305" key="2"/>
<feature type="chain" id="PRO_0000354276" description="Small ribosomal subunit protein uS15c">
    <location>
        <begin position="1"/>
        <end position="90"/>
    </location>
</feature>
<sequence length="90" mass="10803">MVKNAFISVISQEEKEENKGSAEFQVFNFTNKIRRLTSHLELHRKDYLSQRGLRKILGKRQRLLAYLSKKNKVRYKELISQLDIREPKIR</sequence>
<accession>Q09FY9</accession>
<dbReference type="EMBL" id="DQ923116">
    <property type="protein sequence ID" value="ABI49836.1"/>
    <property type="molecule type" value="Genomic_DNA"/>
</dbReference>
<dbReference type="RefSeq" id="YP_740622.1">
    <property type="nucleotide sequence ID" value="NC_008335.1"/>
</dbReference>
<dbReference type="SMR" id="Q09FY9"/>
<dbReference type="GeneID" id="4271361"/>
<dbReference type="GO" id="GO:0009507">
    <property type="term" value="C:chloroplast"/>
    <property type="evidence" value="ECO:0007669"/>
    <property type="project" value="UniProtKB-SubCell"/>
</dbReference>
<dbReference type="GO" id="GO:1990904">
    <property type="term" value="C:ribonucleoprotein complex"/>
    <property type="evidence" value="ECO:0007669"/>
    <property type="project" value="UniProtKB-KW"/>
</dbReference>
<dbReference type="GO" id="GO:0005840">
    <property type="term" value="C:ribosome"/>
    <property type="evidence" value="ECO:0007669"/>
    <property type="project" value="UniProtKB-KW"/>
</dbReference>
<dbReference type="GO" id="GO:0003735">
    <property type="term" value="F:structural constituent of ribosome"/>
    <property type="evidence" value="ECO:0007669"/>
    <property type="project" value="InterPro"/>
</dbReference>
<dbReference type="GO" id="GO:0006412">
    <property type="term" value="P:translation"/>
    <property type="evidence" value="ECO:0007669"/>
    <property type="project" value="UniProtKB-UniRule"/>
</dbReference>
<dbReference type="CDD" id="cd00353">
    <property type="entry name" value="Ribosomal_S15p_S13e"/>
    <property type="match status" value="1"/>
</dbReference>
<dbReference type="Gene3D" id="1.10.287.10">
    <property type="entry name" value="S15/NS1, RNA-binding"/>
    <property type="match status" value="1"/>
</dbReference>
<dbReference type="HAMAP" id="MF_01343_B">
    <property type="entry name" value="Ribosomal_uS15_B"/>
    <property type="match status" value="1"/>
</dbReference>
<dbReference type="InterPro" id="IPR000589">
    <property type="entry name" value="Ribosomal_uS15"/>
</dbReference>
<dbReference type="InterPro" id="IPR005290">
    <property type="entry name" value="Ribosomal_uS15_bac-type"/>
</dbReference>
<dbReference type="InterPro" id="IPR009068">
    <property type="entry name" value="uS15_NS1_RNA-bd_sf"/>
</dbReference>
<dbReference type="NCBIfam" id="TIGR00952">
    <property type="entry name" value="S15_bact"/>
    <property type="match status" value="1"/>
</dbReference>
<dbReference type="PANTHER" id="PTHR23321">
    <property type="entry name" value="RIBOSOMAL PROTEIN S15, BACTERIAL AND ORGANELLAR"/>
    <property type="match status" value="1"/>
</dbReference>
<dbReference type="PANTHER" id="PTHR23321:SF26">
    <property type="entry name" value="SMALL RIBOSOMAL SUBUNIT PROTEIN US15M"/>
    <property type="match status" value="1"/>
</dbReference>
<dbReference type="Pfam" id="PF00312">
    <property type="entry name" value="Ribosomal_S15"/>
    <property type="match status" value="1"/>
</dbReference>
<dbReference type="SMART" id="SM01387">
    <property type="entry name" value="Ribosomal_S15"/>
    <property type="match status" value="1"/>
</dbReference>
<dbReference type="SUPFAM" id="SSF47060">
    <property type="entry name" value="S15/NS1 RNA-binding domain"/>
    <property type="match status" value="1"/>
</dbReference>
<dbReference type="PROSITE" id="PS00362">
    <property type="entry name" value="RIBOSOMAL_S15"/>
    <property type="match status" value="1"/>
</dbReference>
<geneLocation type="chloroplast"/>
<proteinExistence type="inferred from homology"/>
<protein>
    <recommendedName>
        <fullName evidence="2">Small ribosomal subunit protein uS15c</fullName>
    </recommendedName>
    <alternativeName>
        <fullName>30S ribosomal protein S15, chloroplastic</fullName>
    </alternativeName>
</protein>
<keyword id="KW-0150">Chloroplast</keyword>
<keyword id="KW-0934">Plastid</keyword>
<keyword id="KW-0687">Ribonucleoprotein</keyword>
<keyword id="KW-0689">Ribosomal protein</keyword>
<gene>
    <name type="primary">rps15</name>
</gene>
<comment type="subunit">
    <text evidence="1">Part of the 30S ribosomal subunit.</text>
</comment>
<comment type="subcellular location">
    <subcellularLocation>
        <location>Plastid</location>
        <location>Chloroplast</location>
    </subcellularLocation>
</comment>
<comment type="similarity">
    <text evidence="2">Belongs to the universal ribosomal protein uS15 family.</text>
</comment>
<reference key="1">
    <citation type="journal article" date="2006" name="BMC Plant Biol.">
        <title>Rapid and accurate pyrosequencing of angiosperm plastid genomes.</title>
        <authorList>
            <person name="Moore M.J."/>
            <person name="Dhingra A."/>
            <person name="Soltis P.S."/>
            <person name="Shaw R."/>
            <person name="Farmerie W.G."/>
            <person name="Folta K.M."/>
            <person name="Soltis D.E."/>
        </authorList>
    </citation>
    <scope>NUCLEOTIDE SEQUENCE [LARGE SCALE GENOMIC DNA]</scope>
</reference>
<organism>
    <name type="scientific">Platanus occidentalis</name>
    <name type="common">Sycamore</name>
    <name type="synonym">American plane tree</name>
    <dbReference type="NCBI Taxonomy" id="4403"/>
    <lineage>
        <taxon>Eukaryota</taxon>
        <taxon>Viridiplantae</taxon>
        <taxon>Streptophyta</taxon>
        <taxon>Embryophyta</taxon>
        <taxon>Tracheophyta</taxon>
        <taxon>Spermatophyta</taxon>
        <taxon>Magnoliopsida</taxon>
        <taxon>Proteales</taxon>
        <taxon>Platanaceae</taxon>
        <taxon>Platanus</taxon>
    </lineage>
</organism>